<comment type="function">
    <text evidence="1">Catalyzes the conversion of dihydroorotate to orotate with quinone as electron acceptor.</text>
</comment>
<comment type="catalytic activity">
    <reaction evidence="1">
        <text>(S)-dihydroorotate + a quinone = orotate + a quinol</text>
        <dbReference type="Rhea" id="RHEA:30187"/>
        <dbReference type="ChEBI" id="CHEBI:24646"/>
        <dbReference type="ChEBI" id="CHEBI:30839"/>
        <dbReference type="ChEBI" id="CHEBI:30864"/>
        <dbReference type="ChEBI" id="CHEBI:132124"/>
        <dbReference type="EC" id="1.3.5.2"/>
    </reaction>
</comment>
<comment type="cofactor">
    <cofactor evidence="1">
        <name>FMN</name>
        <dbReference type="ChEBI" id="CHEBI:58210"/>
    </cofactor>
    <text evidence="1">Binds 1 FMN per subunit.</text>
</comment>
<comment type="pathway">
    <text evidence="1">Pyrimidine metabolism; UMP biosynthesis via de novo pathway; orotate from (S)-dihydroorotate (quinone route): step 1/1.</text>
</comment>
<comment type="subunit">
    <text evidence="1">Monomer.</text>
</comment>
<comment type="subcellular location">
    <subcellularLocation>
        <location evidence="1">Cell membrane</location>
        <topology evidence="1">Peripheral membrane protein</topology>
    </subcellularLocation>
</comment>
<comment type="similarity">
    <text evidence="1">Belongs to the dihydroorotate dehydrogenase family. Type 2 subfamily.</text>
</comment>
<dbReference type="EC" id="1.3.5.2" evidence="1"/>
<dbReference type="EMBL" id="CP000687">
    <property type="protein sequence ID" value="ABY69340.1"/>
    <property type="molecule type" value="Genomic_DNA"/>
</dbReference>
<dbReference type="RefSeq" id="WP_012262956.1">
    <property type="nucleotide sequence ID" value="NC_010278.1"/>
</dbReference>
<dbReference type="SMR" id="B0BP55"/>
<dbReference type="KEGG" id="apj:APJL_0777"/>
<dbReference type="HOGENOM" id="CLU_013640_2_0_6"/>
<dbReference type="UniPathway" id="UPA00070">
    <property type="reaction ID" value="UER00946"/>
</dbReference>
<dbReference type="Proteomes" id="UP000008547">
    <property type="component" value="Chromosome"/>
</dbReference>
<dbReference type="GO" id="GO:0005737">
    <property type="term" value="C:cytoplasm"/>
    <property type="evidence" value="ECO:0007669"/>
    <property type="project" value="InterPro"/>
</dbReference>
<dbReference type="GO" id="GO:0005886">
    <property type="term" value="C:plasma membrane"/>
    <property type="evidence" value="ECO:0007669"/>
    <property type="project" value="UniProtKB-SubCell"/>
</dbReference>
<dbReference type="GO" id="GO:0106430">
    <property type="term" value="F:dihydroorotate dehydrogenase (quinone) activity"/>
    <property type="evidence" value="ECO:0007669"/>
    <property type="project" value="UniProtKB-EC"/>
</dbReference>
<dbReference type="GO" id="GO:0006207">
    <property type="term" value="P:'de novo' pyrimidine nucleobase biosynthetic process"/>
    <property type="evidence" value="ECO:0007669"/>
    <property type="project" value="InterPro"/>
</dbReference>
<dbReference type="GO" id="GO:0044205">
    <property type="term" value="P:'de novo' UMP biosynthetic process"/>
    <property type="evidence" value="ECO:0007669"/>
    <property type="project" value="UniProtKB-UniRule"/>
</dbReference>
<dbReference type="CDD" id="cd04738">
    <property type="entry name" value="DHOD_2_like"/>
    <property type="match status" value="1"/>
</dbReference>
<dbReference type="FunFam" id="3.20.20.70:FF:000028">
    <property type="entry name" value="Dihydroorotate dehydrogenase (quinone)"/>
    <property type="match status" value="1"/>
</dbReference>
<dbReference type="Gene3D" id="3.20.20.70">
    <property type="entry name" value="Aldolase class I"/>
    <property type="match status" value="1"/>
</dbReference>
<dbReference type="HAMAP" id="MF_00225">
    <property type="entry name" value="DHO_dh_type2"/>
    <property type="match status" value="1"/>
</dbReference>
<dbReference type="InterPro" id="IPR013785">
    <property type="entry name" value="Aldolase_TIM"/>
</dbReference>
<dbReference type="InterPro" id="IPR050074">
    <property type="entry name" value="DHO_dehydrogenase"/>
</dbReference>
<dbReference type="InterPro" id="IPR012135">
    <property type="entry name" value="Dihydroorotate_DH_1_2"/>
</dbReference>
<dbReference type="InterPro" id="IPR005719">
    <property type="entry name" value="Dihydroorotate_DH_2"/>
</dbReference>
<dbReference type="InterPro" id="IPR005720">
    <property type="entry name" value="Dihydroorotate_DH_cat"/>
</dbReference>
<dbReference type="InterPro" id="IPR001295">
    <property type="entry name" value="Dihydroorotate_DH_CS"/>
</dbReference>
<dbReference type="NCBIfam" id="NF003644">
    <property type="entry name" value="PRK05286.1-1"/>
    <property type="match status" value="1"/>
</dbReference>
<dbReference type="NCBIfam" id="NF003645">
    <property type="entry name" value="PRK05286.1-2"/>
    <property type="match status" value="1"/>
</dbReference>
<dbReference type="NCBIfam" id="NF003646">
    <property type="entry name" value="PRK05286.1-4"/>
    <property type="match status" value="1"/>
</dbReference>
<dbReference type="NCBIfam" id="NF003652">
    <property type="entry name" value="PRK05286.2-5"/>
    <property type="match status" value="1"/>
</dbReference>
<dbReference type="NCBIfam" id="TIGR01036">
    <property type="entry name" value="pyrD_sub2"/>
    <property type="match status" value="1"/>
</dbReference>
<dbReference type="PANTHER" id="PTHR48109:SF4">
    <property type="entry name" value="DIHYDROOROTATE DEHYDROGENASE (QUINONE), MITOCHONDRIAL"/>
    <property type="match status" value="1"/>
</dbReference>
<dbReference type="PANTHER" id="PTHR48109">
    <property type="entry name" value="DIHYDROOROTATE DEHYDROGENASE (QUINONE), MITOCHONDRIAL-RELATED"/>
    <property type="match status" value="1"/>
</dbReference>
<dbReference type="Pfam" id="PF01180">
    <property type="entry name" value="DHO_dh"/>
    <property type="match status" value="1"/>
</dbReference>
<dbReference type="PIRSF" id="PIRSF000164">
    <property type="entry name" value="DHO_oxidase"/>
    <property type="match status" value="1"/>
</dbReference>
<dbReference type="SUPFAM" id="SSF51395">
    <property type="entry name" value="FMN-linked oxidoreductases"/>
    <property type="match status" value="1"/>
</dbReference>
<dbReference type="PROSITE" id="PS00911">
    <property type="entry name" value="DHODEHASE_1"/>
    <property type="match status" value="1"/>
</dbReference>
<sequence length="335" mass="36157">MYSLIRKCLFLMDAETAHNFSIQALKLAGKLPINVLPMPLNPVEVMGLQFKNPIGLAAGADKNGEAIDGFGKLGFGFIEVGTVTPVAQDGNPKPRQFRILEAEGIINRNGFNNLGVDVLVENVKKAKYDGIIGINIGKNAVTPIERALDDYQICLRKVYEHADYITVNISSPNTKNLRTLQYGEALDDLLRSLKSEQESLSQKFNRYKPLVLKIAPDLTDEEIASVADGLVRHKIDGVIAGNTTLSRDPVVGLKNAEHQGGLSGNPLNTLSTRLISTLAKELNGALPIIGSGGIHSVASGQEKIDAGASLLQVYSAMIYQGPALIQNLAKHIQVR</sequence>
<protein>
    <recommendedName>
        <fullName evidence="1">Dihydroorotate dehydrogenase (quinone)</fullName>
        <ecNumber evidence="1">1.3.5.2</ecNumber>
    </recommendedName>
    <alternativeName>
        <fullName evidence="1">DHOdehase</fullName>
        <shortName evidence="1">DHOD</shortName>
        <shortName evidence="1">DHODase</shortName>
    </alternativeName>
    <alternativeName>
        <fullName evidence="1">Dihydroorotate oxidase</fullName>
    </alternativeName>
</protein>
<reference key="1">
    <citation type="journal article" date="2008" name="PLoS ONE">
        <title>Genome biology of Actinobacillus pleuropneumoniae JL03, an isolate of serotype 3 prevalent in China.</title>
        <authorList>
            <person name="Xu Z."/>
            <person name="Zhou Y."/>
            <person name="Li L."/>
            <person name="Zhou R."/>
            <person name="Xiao S."/>
            <person name="Wan Y."/>
            <person name="Zhang S."/>
            <person name="Wang K."/>
            <person name="Li W."/>
            <person name="Li L."/>
            <person name="Jin H."/>
            <person name="Kang M."/>
            <person name="Dalai B."/>
            <person name="Li T."/>
            <person name="Liu L."/>
            <person name="Cheng Y."/>
            <person name="Zhang L."/>
            <person name="Xu T."/>
            <person name="Zheng H."/>
            <person name="Pu S."/>
            <person name="Wang B."/>
            <person name="Gu W."/>
            <person name="Zhang X.L."/>
            <person name="Zhu G.-F."/>
            <person name="Wang S."/>
            <person name="Zhao G.-P."/>
            <person name="Chen H."/>
        </authorList>
    </citation>
    <scope>NUCLEOTIDE SEQUENCE [LARGE SCALE GENOMIC DNA]</scope>
    <source>
        <strain>JL03</strain>
    </source>
</reference>
<keyword id="KW-1003">Cell membrane</keyword>
<keyword id="KW-0285">Flavoprotein</keyword>
<keyword id="KW-0288">FMN</keyword>
<keyword id="KW-0472">Membrane</keyword>
<keyword id="KW-0560">Oxidoreductase</keyword>
<keyword id="KW-0665">Pyrimidine biosynthesis</keyword>
<gene>
    <name evidence="1" type="primary">pyrD</name>
    <name type="ordered locus">APJL_0777</name>
</gene>
<evidence type="ECO:0000255" key="1">
    <source>
        <dbReference type="HAMAP-Rule" id="MF_00225"/>
    </source>
</evidence>
<proteinExistence type="inferred from homology"/>
<accession>B0BP55</accession>
<feature type="chain" id="PRO_1000100245" description="Dihydroorotate dehydrogenase (quinone)">
    <location>
        <begin position="1"/>
        <end position="335"/>
    </location>
</feature>
<feature type="active site" description="Nucleophile" evidence="1">
    <location>
        <position position="171"/>
    </location>
</feature>
<feature type="binding site" evidence="1">
    <location>
        <begin position="58"/>
        <end position="62"/>
    </location>
    <ligand>
        <name>FMN</name>
        <dbReference type="ChEBI" id="CHEBI:58210"/>
    </ligand>
</feature>
<feature type="binding site" evidence="1">
    <location>
        <position position="62"/>
    </location>
    <ligand>
        <name>substrate</name>
    </ligand>
</feature>
<feature type="binding site" evidence="1">
    <location>
        <position position="82"/>
    </location>
    <ligand>
        <name>FMN</name>
        <dbReference type="ChEBI" id="CHEBI:58210"/>
    </ligand>
</feature>
<feature type="binding site" evidence="1">
    <location>
        <begin position="107"/>
        <end position="111"/>
    </location>
    <ligand>
        <name>substrate</name>
    </ligand>
</feature>
<feature type="binding site" evidence="1">
    <location>
        <position position="135"/>
    </location>
    <ligand>
        <name>FMN</name>
        <dbReference type="ChEBI" id="CHEBI:58210"/>
    </ligand>
</feature>
<feature type="binding site" evidence="1">
    <location>
        <position position="168"/>
    </location>
    <ligand>
        <name>FMN</name>
        <dbReference type="ChEBI" id="CHEBI:58210"/>
    </ligand>
</feature>
<feature type="binding site" evidence="1">
    <location>
        <position position="168"/>
    </location>
    <ligand>
        <name>substrate</name>
    </ligand>
</feature>
<feature type="binding site" evidence="1">
    <location>
        <position position="173"/>
    </location>
    <ligand>
        <name>substrate</name>
    </ligand>
</feature>
<feature type="binding site" evidence="1">
    <location>
        <position position="213"/>
    </location>
    <ligand>
        <name>FMN</name>
        <dbReference type="ChEBI" id="CHEBI:58210"/>
    </ligand>
</feature>
<feature type="binding site" evidence="1">
    <location>
        <position position="241"/>
    </location>
    <ligand>
        <name>FMN</name>
        <dbReference type="ChEBI" id="CHEBI:58210"/>
    </ligand>
</feature>
<feature type="binding site" evidence="1">
    <location>
        <begin position="242"/>
        <end position="243"/>
    </location>
    <ligand>
        <name>substrate</name>
    </ligand>
</feature>
<feature type="binding site" evidence="1">
    <location>
        <position position="264"/>
    </location>
    <ligand>
        <name>FMN</name>
        <dbReference type="ChEBI" id="CHEBI:58210"/>
    </ligand>
</feature>
<feature type="binding site" evidence="1">
    <location>
        <position position="293"/>
    </location>
    <ligand>
        <name>FMN</name>
        <dbReference type="ChEBI" id="CHEBI:58210"/>
    </ligand>
</feature>
<feature type="binding site" evidence="1">
    <location>
        <begin position="314"/>
        <end position="315"/>
    </location>
    <ligand>
        <name>FMN</name>
        <dbReference type="ChEBI" id="CHEBI:58210"/>
    </ligand>
</feature>
<organism>
    <name type="scientific">Actinobacillus pleuropneumoniae serotype 3 (strain JL03)</name>
    <dbReference type="NCBI Taxonomy" id="434271"/>
    <lineage>
        <taxon>Bacteria</taxon>
        <taxon>Pseudomonadati</taxon>
        <taxon>Pseudomonadota</taxon>
        <taxon>Gammaproteobacteria</taxon>
        <taxon>Pasteurellales</taxon>
        <taxon>Pasteurellaceae</taxon>
        <taxon>Actinobacillus</taxon>
    </lineage>
</organism>
<name>PYRD_ACTPJ</name>